<comment type="function">
    <text evidence="1">May play a role in DNA repair. It seems to be involved in an RecBC-independent recombinational process of DNA repair. It may act with RecF and RecO.</text>
</comment>
<comment type="similarity">
    <text evidence="1">Belongs to the RecR family.</text>
</comment>
<reference key="1">
    <citation type="journal article" date="1998" name="Science">
        <title>Complete genome sequence of Treponema pallidum, the syphilis spirochete.</title>
        <authorList>
            <person name="Fraser C.M."/>
            <person name="Norris S.J."/>
            <person name="Weinstock G.M."/>
            <person name="White O."/>
            <person name="Sutton G.G."/>
            <person name="Dodson R.J."/>
            <person name="Gwinn M.L."/>
            <person name="Hickey E.K."/>
            <person name="Clayton R.A."/>
            <person name="Ketchum K.A."/>
            <person name="Sodergren E."/>
            <person name="Hardham J.M."/>
            <person name="McLeod M.P."/>
            <person name="Salzberg S.L."/>
            <person name="Peterson J.D."/>
            <person name="Khalak H.G."/>
            <person name="Richardson D.L."/>
            <person name="Howell J.K."/>
            <person name="Chidambaram M."/>
            <person name="Utterback T.R."/>
            <person name="McDonald L.A."/>
            <person name="Artiach P."/>
            <person name="Bowman C."/>
            <person name="Cotton M.D."/>
            <person name="Fujii C."/>
            <person name="Garland S.A."/>
            <person name="Hatch B."/>
            <person name="Horst K."/>
            <person name="Roberts K.M."/>
            <person name="Sandusky M."/>
            <person name="Weidman J.F."/>
            <person name="Smith H.O."/>
            <person name="Venter J.C."/>
        </authorList>
    </citation>
    <scope>NUCLEOTIDE SEQUENCE [LARGE SCALE GENOMIC DNA]</scope>
    <source>
        <strain>Nichols</strain>
    </source>
</reference>
<proteinExistence type="inferred from homology"/>
<name>RECR_TREPA</name>
<sequence length="201" mass="21800">MIPAIEEVVEHLSRLPGIGVKLATRLAYHLLKRDPAEAQVLARGIACLHERVYRCVCCGAFCEGRTCALCTDASRDRGIICVVERAQDVEMMAGVGEYRGLFHVLGGVIAPLEGVGPDQLRIAALLKRLQESSVREVILALNPTVEGDTTALYVQKILANFPVIVTRLASGIPVGGDLEYIDRTTLAHSLRGRRPLDCSEA</sequence>
<feature type="chain" id="PRO_0000190416" description="Recombination protein RecR">
    <location>
        <begin position="1"/>
        <end position="201"/>
    </location>
</feature>
<feature type="domain" description="Toprim" evidence="1">
    <location>
        <begin position="78"/>
        <end position="173"/>
    </location>
</feature>
<feature type="zinc finger region" description="C4-type" evidence="1">
    <location>
        <begin position="55"/>
        <end position="70"/>
    </location>
</feature>
<gene>
    <name evidence="1" type="primary">recR</name>
    <name type="ordered locus">TP_1004</name>
</gene>
<evidence type="ECO:0000255" key="1">
    <source>
        <dbReference type="HAMAP-Rule" id="MF_00017"/>
    </source>
</evidence>
<accession>O83969</accession>
<dbReference type="EMBL" id="AE000520">
    <property type="protein sequence ID" value="AAC65952.1"/>
    <property type="molecule type" value="Genomic_DNA"/>
</dbReference>
<dbReference type="PIR" id="F71254">
    <property type="entry name" value="F71254"/>
</dbReference>
<dbReference type="RefSeq" id="WP_010882448.1">
    <property type="nucleotide sequence ID" value="NC_021490.2"/>
</dbReference>
<dbReference type="SMR" id="O83969"/>
<dbReference type="IntAct" id="O83969">
    <property type="interactions" value="76"/>
</dbReference>
<dbReference type="STRING" id="243276.TP_1004"/>
<dbReference type="EnsemblBacteria" id="AAC65952">
    <property type="protein sequence ID" value="AAC65952"/>
    <property type="gene ID" value="TP_1004"/>
</dbReference>
<dbReference type="GeneID" id="93876751"/>
<dbReference type="KEGG" id="tpa:TP_1004"/>
<dbReference type="KEGG" id="tpw:TPANIC_1004"/>
<dbReference type="eggNOG" id="COG0353">
    <property type="taxonomic scope" value="Bacteria"/>
</dbReference>
<dbReference type="HOGENOM" id="CLU_060739_1_0_12"/>
<dbReference type="OrthoDB" id="9802672at2"/>
<dbReference type="Proteomes" id="UP000000811">
    <property type="component" value="Chromosome"/>
</dbReference>
<dbReference type="GO" id="GO:0003677">
    <property type="term" value="F:DNA binding"/>
    <property type="evidence" value="ECO:0007669"/>
    <property type="project" value="UniProtKB-UniRule"/>
</dbReference>
<dbReference type="GO" id="GO:0008270">
    <property type="term" value="F:zinc ion binding"/>
    <property type="evidence" value="ECO:0007669"/>
    <property type="project" value="UniProtKB-KW"/>
</dbReference>
<dbReference type="GO" id="GO:0006310">
    <property type="term" value="P:DNA recombination"/>
    <property type="evidence" value="ECO:0007669"/>
    <property type="project" value="UniProtKB-UniRule"/>
</dbReference>
<dbReference type="GO" id="GO:0006281">
    <property type="term" value="P:DNA repair"/>
    <property type="evidence" value="ECO:0007669"/>
    <property type="project" value="UniProtKB-UniRule"/>
</dbReference>
<dbReference type="CDD" id="cd01025">
    <property type="entry name" value="TOPRIM_recR"/>
    <property type="match status" value="1"/>
</dbReference>
<dbReference type="Gene3D" id="3.40.1360.10">
    <property type="match status" value="1"/>
</dbReference>
<dbReference type="Gene3D" id="6.10.250.240">
    <property type="match status" value="1"/>
</dbReference>
<dbReference type="Gene3D" id="1.10.8.420">
    <property type="entry name" value="RecR Domain 1"/>
    <property type="match status" value="1"/>
</dbReference>
<dbReference type="HAMAP" id="MF_00017">
    <property type="entry name" value="RecR"/>
    <property type="match status" value="1"/>
</dbReference>
<dbReference type="InterPro" id="IPR000093">
    <property type="entry name" value="DNA_Rcmb_RecR"/>
</dbReference>
<dbReference type="InterPro" id="IPR023627">
    <property type="entry name" value="Rcmb_RecR"/>
</dbReference>
<dbReference type="InterPro" id="IPR015967">
    <property type="entry name" value="Rcmb_RecR_Znf"/>
</dbReference>
<dbReference type="InterPro" id="IPR006171">
    <property type="entry name" value="TOPRIM_dom"/>
</dbReference>
<dbReference type="InterPro" id="IPR034137">
    <property type="entry name" value="TOPRIM_RecR"/>
</dbReference>
<dbReference type="NCBIfam" id="TIGR00615">
    <property type="entry name" value="recR"/>
    <property type="match status" value="1"/>
</dbReference>
<dbReference type="PANTHER" id="PTHR30446">
    <property type="entry name" value="RECOMBINATION PROTEIN RECR"/>
    <property type="match status" value="1"/>
</dbReference>
<dbReference type="PANTHER" id="PTHR30446:SF0">
    <property type="entry name" value="RECOMBINATION PROTEIN RECR"/>
    <property type="match status" value="1"/>
</dbReference>
<dbReference type="Pfam" id="PF21175">
    <property type="entry name" value="RecR_C"/>
    <property type="match status" value="1"/>
</dbReference>
<dbReference type="Pfam" id="PF21176">
    <property type="entry name" value="RecR_HhH"/>
    <property type="match status" value="1"/>
</dbReference>
<dbReference type="Pfam" id="PF13662">
    <property type="entry name" value="Toprim_4"/>
    <property type="match status" value="1"/>
</dbReference>
<dbReference type="SMART" id="SM00493">
    <property type="entry name" value="TOPRIM"/>
    <property type="match status" value="1"/>
</dbReference>
<dbReference type="SUPFAM" id="SSF111304">
    <property type="entry name" value="Recombination protein RecR"/>
    <property type="match status" value="1"/>
</dbReference>
<dbReference type="PROSITE" id="PS01300">
    <property type="entry name" value="RECR"/>
    <property type="match status" value="1"/>
</dbReference>
<dbReference type="PROSITE" id="PS50880">
    <property type="entry name" value="TOPRIM"/>
    <property type="match status" value="1"/>
</dbReference>
<keyword id="KW-0227">DNA damage</keyword>
<keyword id="KW-0233">DNA recombination</keyword>
<keyword id="KW-0234">DNA repair</keyword>
<keyword id="KW-0479">Metal-binding</keyword>
<keyword id="KW-1185">Reference proteome</keyword>
<keyword id="KW-0862">Zinc</keyword>
<keyword id="KW-0863">Zinc-finger</keyword>
<organism>
    <name type="scientific">Treponema pallidum (strain Nichols)</name>
    <dbReference type="NCBI Taxonomy" id="243276"/>
    <lineage>
        <taxon>Bacteria</taxon>
        <taxon>Pseudomonadati</taxon>
        <taxon>Spirochaetota</taxon>
        <taxon>Spirochaetia</taxon>
        <taxon>Spirochaetales</taxon>
        <taxon>Treponemataceae</taxon>
        <taxon>Treponema</taxon>
    </lineage>
</organism>
<protein>
    <recommendedName>
        <fullName evidence="1">Recombination protein RecR</fullName>
    </recommendedName>
</protein>